<protein>
    <recommendedName>
        <fullName evidence="10">Adenosylhomocysteinase-like 2</fullName>
        <shortName evidence="7">dAhcyL2</shortName>
    </recommendedName>
    <alternativeName>
        <fullName evidence="8">Inactive S-adenosyl-L-homocysteine hydrolase 2</fullName>
    </alternativeName>
    <alternativeName>
        <fullName evidence="8">S-adenosylhomocysteine hydrolase-like protein 2</fullName>
    </alternativeName>
</protein>
<dbReference type="EMBL" id="X13168">
    <property type="protein sequence ID" value="CAA31566.1"/>
    <property type="molecule type" value="Genomic_DNA"/>
</dbReference>
<dbReference type="EMBL" id="U31961">
    <property type="protein sequence ID" value="AAA84400.1"/>
    <property type="status" value="ALT_SEQ"/>
    <property type="molecule type" value="Genomic_DNA"/>
</dbReference>
<dbReference type="EMBL" id="AE014297">
    <property type="protein sequence ID" value="AAF55367.2"/>
    <property type="molecule type" value="Genomic_DNA"/>
</dbReference>
<dbReference type="EMBL" id="AY113501">
    <property type="protein sequence ID" value="AAM29506.1"/>
    <property type="molecule type" value="mRNA"/>
</dbReference>
<dbReference type="PIR" id="S01302">
    <property type="entry name" value="S01302"/>
</dbReference>
<dbReference type="RefSeq" id="NP_996221.1">
    <property type="nucleotide sequence ID" value="NM_206499.2"/>
</dbReference>
<dbReference type="RefSeq" id="NP_996222.1">
    <property type="nucleotide sequence ID" value="NM_206500.2"/>
</dbReference>
<dbReference type="SMR" id="P50245"/>
<dbReference type="BioGRID" id="67084">
    <property type="interactions" value="7"/>
</dbReference>
<dbReference type="DIP" id="DIP-24031N"/>
<dbReference type="FunCoup" id="P50245">
    <property type="interactions" value="40"/>
</dbReference>
<dbReference type="IntAct" id="P50245">
    <property type="interactions" value="3"/>
</dbReference>
<dbReference type="STRING" id="7227.FBpp0089085"/>
<dbReference type="PaxDb" id="7227-FBpp0089085"/>
<dbReference type="DNASU" id="42043"/>
<dbReference type="EnsemblMetazoa" id="FBtr0083378">
    <property type="protein sequence ID" value="FBpp0082821"/>
    <property type="gene ID" value="FBgn0015011"/>
</dbReference>
<dbReference type="GeneID" id="42043"/>
<dbReference type="KEGG" id="dme:Dmel_CG8956"/>
<dbReference type="AGR" id="FB:FBgn0015011"/>
<dbReference type="CTD" id="23382"/>
<dbReference type="FlyBase" id="FBgn0015011">
    <property type="gene designation" value="AhcyL2"/>
</dbReference>
<dbReference type="VEuPathDB" id="VectorBase:FBgn0015011"/>
<dbReference type="eggNOG" id="KOG1370">
    <property type="taxonomic scope" value="Eukaryota"/>
</dbReference>
<dbReference type="GeneTree" id="ENSGT00950000182981"/>
<dbReference type="HOGENOM" id="CLU_025194_2_1_1"/>
<dbReference type="InParanoid" id="P50245"/>
<dbReference type="OrthoDB" id="10007170at2759"/>
<dbReference type="PhylomeDB" id="P50245"/>
<dbReference type="Reactome" id="R-DME-5578775">
    <property type="pathway name" value="Ion homeostasis"/>
</dbReference>
<dbReference type="BioGRID-ORCS" id="42043">
    <property type="hits" value="0 hits in 3 CRISPR screens"/>
</dbReference>
<dbReference type="GenomeRNAi" id="42043"/>
<dbReference type="PRO" id="PR:P50245"/>
<dbReference type="Proteomes" id="UP000000803">
    <property type="component" value="Chromosome 3R"/>
</dbReference>
<dbReference type="Bgee" id="FBgn0015011">
    <property type="expression patterns" value="Expressed in adult hindgut (Drosophila) and 35 other cell types or tissues"/>
</dbReference>
<dbReference type="ExpressionAtlas" id="P50245">
    <property type="expression patterns" value="baseline and differential"/>
</dbReference>
<dbReference type="GO" id="GO:0005829">
    <property type="term" value="C:cytosol"/>
    <property type="evidence" value="ECO:0000318"/>
    <property type="project" value="GO_Central"/>
</dbReference>
<dbReference type="GO" id="GO:0006730">
    <property type="term" value="P:one-carbon metabolic process"/>
    <property type="evidence" value="ECO:0007669"/>
    <property type="project" value="UniProtKB-KW"/>
</dbReference>
<dbReference type="GO" id="GO:0033353">
    <property type="term" value="P:S-adenosylmethionine cycle"/>
    <property type="evidence" value="ECO:0000318"/>
    <property type="project" value="GO_Central"/>
</dbReference>
<dbReference type="CDD" id="cd00401">
    <property type="entry name" value="SAHH"/>
    <property type="match status" value="1"/>
</dbReference>
<dbReference type="FunFam" id="3.40.50.1480:FF:000002">
    <property type="entry name" value="Adenosylhomocysteinase"/>
    <property type="match status" value="1"/>
</dbReference>
<dbReference type="FunFam" id="3.40.50.720:FF:000035">
    <property type="entry name" value="Adenosylhomocysteinase"/>
    <property type="match status" value="1"/>
</dbReference>
<dbReference type="FunFam" id="3.40.50.1480:FF:000009">
    <property type="entry name" value="Adenosylhomocysteinase like 2"/>
    <property type="match status" value="1"/>
</dbReference>
<dbReference type="Gene3D" id="3.40.50.1480">
    <property type="entry name" value="Adenosylhomocysteinase-like"/>
    <property type="match status" value="3"/>
</dbReference>
<dbReference type="Gene3D" id="3.40.50.720">
    <property type="entry name" value="NAD(P)-binding Rossmann-like Domain"/>
    <property type="match status" value="1"/>
</dbReference>
<dbReference type="InterPro" id="IPR042172">
    <property type="entry name" value="Adenosylhomocyst_ase-like_sf"/>
</dbReference>
<dbReference type="InterPro" id="IPR000043">
    <property type="entry name" value="Adenosylhomocysteinase-like"/>
</dbReference>
<dbReference type="InterPro" id="IPR015878">
    <property type="entry name" value="Ado_hCys_hydrolase_NAD-bd"/>
</dbReference>
<dbReference type="InterPro" id="IPR036291">
    <property type="entry name" value="NAD(P)-bd_dom_sf"/>
</dbReference>
<dbReference type="InterPro" id="IPR020082">
    <property type="entry name" value="S-Ado-L-homoCys_hydrolase_CS"/>
</dbReference>
<dbReference type="NCBIfam" id="TIGR00936">
    <property type="entry name" value="ahcY"/>
    <property type="match status" value="1"/>
</dbReference>
<dbReference type="NCBIfam" id="NF004005">
    <property type="entry name" value="PRK05476.2-3"/>
    <property type="match status" value="1"/>
</dbReference>
<dbReference type="PANTHER" id="PTHR23420">
    <property type="entry name" value="ADENOSYLHOMOCYSTEINASE"/>
    <property type="match status" value="1"/>
</dbReference>
<dbReference type="PANTHER" id="PTHR23420:SF0">
    <property type="entry name" value="ADENOSYLHOMOCYSTEINASE"/>
    <property type="match status" value="1"/>
</dbReference>
<dbReference type="Pfam" id="PF05221">
    <property type="entry name" value="AdoHcyase"/>
    <property type="match status" value="1"/>
</dbReference>
<dbReference type="Pfam" id="PF00670">
    <property type="entry name" value="AdoHcyase_NAD"/>
    <property type="match status" value="1"/>
</dbReference>
<dbReference type="PIRSF" id="PIRSF001109">
    <property type="entry name" value="Ad_hcy_hydrolase"/>
    <property type="match status" value="1"/>
</dbReference>
<dbReference type="SMART" id="SM00996">
    <property type="entry name" value="AdoHcyase"/>
    <property type="match status" value="1"/>
</dbReference>
<dbReference type="SMART" id="SM00997">
    <property type="entry name" value="AdoHcyase_NAD"/>
    <property type="match status" value="1"/>
</dbReference>
<dbReference type="SUPFAM" id="SSF52283">
    <property type="entry name" value="Formate/glycerate dehydrogenase catalytic domain-like"/>
    <property type="match status" value="1"/>
</dbReference>
<dbReference type="SUPFAM" id="SSF51735">
    <property type="entry name" value="NAD(P)-binding Rossmann-fold domains"/>
    <property type="match status" value="1"/>
</dbReference>
<dbReference type="PROSITE" id="PS00738">
    <property type="entry name" value="ADOHCYASE_1"/>
    <property type="match status" value="1"/>
</dbReference>
<dbReference type="PROSITE" id="PS00739">
    <property type="entry name" value="ADOHCYASE_2"/>
    <property type="match status" value="1"/>
</dbReference>
<gene>
    <name evidence="10" type="primary">AhcyL2</name>
    <name evidence="10" type="synonym">AHCY</name>
    <name evidence="10" type="synonym">Ahcy89E</name>
    <name evidence="10" type="synonym">pH200</name>
    <name evidence="10" type="ORF">CG8956</name>
</gene>
<keyword id="KW-0520">NAD</keyword>
<keyword id="KW-0554">One-carbon metabolism</keyword>
<keyword id="KW-1185">Reference proteome</keyword>
<sequence>MAKMPETTFADLSLADKTAVKKSSIEARRFSDVSTCSFSSTCFTGSSDEEDVSPKDNHQRNSAGGTDFCVKSISKSAFGRREIEIAESEMPGIMTLRKRAKDEKPLKGANIVGCTHVNAQSAVLIETLVQLGATVRWAACNIYSTQNAVAAALAEAGIPIFAWRGETEEEFWWCLDRAIYSDGWQPNLILDDGGDATHLMLKKYPDYFKAIRGIVEESVTGVHRLYMLSKGGKLTVPAINVNDSVTKNKFDTFYTCRDSILDSLKRTTDIMFGGKQVVICGYGDVGKGCAQSLKGQGCIVYVTEVDPICALQAAMDGFRVVRLNEVIRTVDVVVTATGNKNVITRDHMNRMKNGCILCNMGHSCSEIDVNGLHTPELTWERVRSQVDHIRWPDGRMIILLAEGRLVNLSCSTISSFVVSVASSTQALALIELFSAPGRYKSDVYLLPKKMDEYVASLHLATFDAHLTELTDEQSKFMGLNKAGPFKANYYRY</sequence>
<proteinExistence type="evidence at transcript level"/>
<name>SAHH3_DROME</name>
<evidence type="ECO:0000250" key="1">
    <source>
        <dbReference type="UniProtKB" id="O43865"/>
    </source>
</evidence>
<evidence type="ECO:0000250" key="2">
    <source>
        <dbReference type="UniProtKB" id="P10760"/>
    </source>
</evidence>
<evidence type="ECO:0000256" key="3">
    <source>
        <dbReference type="SAM" id="MobiDB-lite"/>
    </source>
</evidence>
<evidence type="ECO:0000269" key="4">
    <source>
    </source>
</evidence>
<evidence type="ECO:0000269" key="5">
    <source>
    </source>
</evidence>
<evidence type="ECO:0000269" key="6">
    <source>
    </source>
</evidence>
<evidence type="ECO:0000303" key="7">
    <source>
    </source>
</evidence>
<evidence type="ECO:0000305" key="8"/>
<evidence type="ECO:0000305" key="9">
    <source>
    </source>
</evidence>
<evidence type="ECO:0000312" key="10">
    <source>
        <dbReference type="FlyBase" id="FBgn0015011"/>
    </source>
</evidence>
<reference key="1">
    <citation type="journal article" date="1988" name="EMBO J.">
        <title>Evidence that the Abdominal-B r element function is conferred by a trans-regulatory homeoprotein.</title>
        <authorList>
            <person name="Delorenzi M."/>
            <person name="Ali N."/>
            <person name="Saari G."/>
            <person name="Henry C."/>
            <person name="Wilcox M."/>
            <person name="Bienz M."/>
        </authorList>
    </citation>
    <scope>NUCLEOTIDE SEQUENCE [GENOMIC DNA]</scope>
    <scope>TISSUE SPECIFICITY</scope>
    <source>
        <tissue>Embryo</tissue>
    </source>
</reference>
<reference key="2">
    <citation type="journal article" date="1995" name="Proc. Natl. Acad. Sci. U.S.A.">
        <title>Complete sequence of the bithorax complex of Drosophila.</title>
        <authorList>
            <person name="Martin C.H."/>
            <person name="Mayeda C.A."/>
            <person name="Davis C.A."/>
            <person name="Ericsson C.L."/>
            <person name="Knafels J.D."/>
            <person name="Mathog D.R."/>
            <person name="Celniker S.E."/>
            <person name="Lewis E.B."/>
            <person name="Palazzolo M.J."/>
        </authorList>
    </citation>
    <scope>NUCLEOTIDE SEQUENCE [GENOMIC DNA]</scope>
    <source>
        <strain>Canton-S</strain>
    </source>
</reference>
<reference key="3">
    <citation type="journal article" date="2000" name="Science">
        <title>The genome sequence of Drosophila melanogaster.</title>
        <authorList>
            <person name="Adams M.D."/>
            <person name="Celniker S.E."/>
            <person name="Holt R.A."/>
            <person name="Evans C.A."/>
            <person name="Gocayne J.D."/>
            <person name="Amanatides P.G."/>
            <person name="Scherer S.E."/>
            <person name="Li P.W."/>
            <person name="Hoskins R.A."/>
            <person name="Galle R.F."/>
            <person name="George R.A."/>
            <person name="Lewis S.E."/>
            <person name="Richards S."/>
            <person name="Ashburner M."/>
            <person name="Henderson S.N."/>
            <person name="Sutton G.G."/>
            <person name="Wortman J.R."/>
            <person name="Yandell M.D."/>
            <person name="Zhang Q."/>
            <person name="Chen L.X."/>
            <person name="Brandon R.C."/>
            <person name="Rogers Y.-H.C."/>
            <person name="Blazej R.G."/>
            <person name="Champe M."/>
            <person name="Pfeiffer B.D."/>
            <person name="Wan K.H."/>
            <person name="Doyle C."/>
            <person name="Baxter E.G."/>
            <person name="Helt G."/>
            <person name="Nelson C.R."/>
            <person name="Miklos G.L.G."/>
            <person name="Abril J.F."/>
            <person name="Agbayani A."/>
            <person name="An H.-J."/>
            <person name="Andrews-Pfannkoch C."/>
            <person name="Baldwin D."/>
            <person name="Ballew R.M."/>
            <person name="Basu A."/>
            <person name="Baxendale J."/>
            <person name="Bayraktaroglu L."/>
            <person name="Beasley E.M."/>
            <person name="Beeson K.Y."/>
            <person name="Benos P.V."/>
            <person name="Berman B.P."/>
            <person name="Bhandari D."/>
            <person name="Bolshakov S."/>
            <person name="Borkova D."/>
            <person name="Botchan M.R."/>
            <person name="Bouck J."/>
            <person name="Brokstein P."/>
            <person name="Brottier P."/>
            <person name="Burtis K.C."/>
            <person name="Busam D.A."/>
            <person name="Butler H."/>
            <person name="Cadieu E."/>
            <person name="Center A."/>
            <person name="Chandra I."/>
            <person name="Cherry J.M."/>
            <person name="Cawley S."/>
            <person name="Dahlke C."/>
            <person name="Davenport L.B."/>
            <person name="Davies P."/>
            <person name="de Pablos B."/>
            <person name="Delcher A."/>
            <person name="Deng Z."/>
            <person name="Mays A.D."/>
            <person name="Dew I."/>
            <person name="Dietz S.M."/>
            <person name="Dodson K."/>
            <person name="Doup L.E."/>
            <person name="Downes M."/>
            <person name="Dugan-Rocha S."/>
            <person name="Dunkov B.C."/>
            <person name="Dunn P."/>
            <person name="Durbin K.J."/>
            <person name="Evangelista C.C."/>
            <person name="Ferraz C."/>
            <person name="Ferriera S."/>
            <person name="Fleischmann W."/>
            <person name="Fosler C."/>
            <person name="Gabrielian A.E."/>
            <person name="Garg N.S."/>
            <person name="Gelbart W.M."/>
            <person name="Glasser K."/>
            <person name="Glodek A."/>
            <person name="Gong F."/>
            <person name="Gorrell J.H."/>
            <person name="Gu Z."/>
            <person name="Guan P."/>
            <person name="Harris M."/>
            <person name="Harris N.L."/>
            <person name="Harvey D.A."/>
            <person name="Heiman T.J."/>
            <person name="Hernandez J.R."/>
            <person name="Houck J."/>
            <person name="Hostin D."/>
            <person name="Houston K.A."/>
            <person name="Howland T.J."/>
            <person name="Wei M.-H."/>
            <person name="Ibegwam C."/>
            <person name="Jalali M."/>
            <person name="Kalush F."/>
            <person name="Karpen G.H."/>
            <person name="Ke Z."/>
            <person name="Kennison J.A."/>
            <person name="Ketchum K.A."/>
            <person name="Kimmel B.E."/>
            <person name="Kodira C.D."/>
            <person name="Kraft C.L."/>
            <person name="Kravitz S."/>
            <person name="Kulp D."/>
            <person name="Lai Z."/>
            <person name="Lasko P."/>
            <person name="Lei Y."/>
            <person name="Levitsky A.A."/>
            <person name="Li J.H."/>
            <person name="Li Z."/>
            <person name="Liang Y."/>
            <person name="Lin X."/>
            <person name="Liu X."/>
            <person name="Mattei B."/>
            <person name="McIntosh T.C."/>
            <person name="McLeod M.P."/>
            <person name="McPherson D."/>
            <person name="Merkulov G."/>
            <person name="Milshina N.V."/>
            <person name="Mobarry C."/>
            <person name="Morris J."/>
            <person name="Moshrefi A."/>
            <person name="Mount S.M."/>
            <person name="Moy M."/>
            <person name="Murphy B."/>
            <person name="Murphy L."/>
            <person name="Muzny D.M."/>
            <person name="Nelson D.L."/>
            <person name="Nelson D.R."/>
            <person name="Nelson K.A."/>
            <person name="Nixon K."/>
            <person name="Nusskern D.R."/>
            <person name="Pacleb J.M."/>
            <person name="Palazzolo M."/>
            <person name="Pittman G.S."/>
            <person name="Pan S."/>
            <person name="Pollard J."/>
            <person name="Puri V."/>
            <person name="Reese M.G."/>
            <person name="Reinert K."/>
            <person name="Remington K."/>
            <person name="Saunders R.D.C."/>
            <person name="Scheeler F."/>
            <person name="Shen H."/>
            <person name="Shue B.C."/>
            <person name="Siden-Kiamos I."/>
            <person name="Simpson M."/>
            <person name="Skupski M.P."/>
            <person name="Smith T.J."/>
            <person name="Spier E."/>
            <person name="Spradling A.C."/>
            <person name="Stapleton M."/>
            <person name="Strong R."/>
            <person name="Sun E."/>
            <person name="Svirskas R."/>
            <person name="Tector C."/>
            <person name="Turner R."/>
            <person name="Venter E."/>
            <person name="Wang A.H."/>
            <person name="Wang X."/>
            <person name="Wang Z.-Y."/>
            <person name="Wassarman D.A."/>
            <person name="Weinstock G.M."/>
            <person name="Weissenbach J."/>
            <person name="Williams S.M."/>
            <person name="Woodage T."/>
            <person name="Worley K.C."/>
            <person name="Wu D."/>
            <person name="Yang S."/>
            <person name="Yao Q.A."/>
            <person name="Ye J."/>
            <person name="Yeh R.-F."/>
            <person name="Zaveri J.S."/>
            <person name="Zhan M."/>
            <person name="Zhang G."/>
            <person name="Zhao Q."/>
            <person name="Zheng L."/>
            <person name="Zheng X.H."/>
            <person name="Zhong F.N."/>
            <person name="Zhong W."/>
            <person name="Zhou X."/>
            <person name="Zhu S.C."/>
            <person name="Zhu X."/>
            <person name="Smith H.O."/>
            <person name="Gibbs R.A."/>
            <person name="Myers E.W."/>
            <person name="Rubin G.M."/>
            <person name="Venter J.C."/>
        </authorList>
    </citation>
    <scope>NUCLEOTIDE SEQUENCE [LARGE SCALE GENOMIC DNA]</scope>
    <source>
        <strain>Berkeley</strain>
    </source>
</reference>
<reference key="4">
    <citation type="journal article" date="2002" name="Genome Biol.">
        <title>Annotation of the Drosophila melanogaster euchromatic genome: a systematic review.</title>
        <authorList>
            <person name="Misra S."/>
            <person name="Crosby M.A."/>
            <person name="Mungall C.J."/>
            <person name="Matthews B.B."/>
            <person name="Campbell K.S."/>
            <person name="Hradecky P."/>
            <person name="Huang Y."/>
            <person name="Kaminker J.S."/>
            <person name="Millburn G.H."/>
            <person name="Prochnik S.E."/>
            <person name="Smith C.D."/>
            <person name="Tupy J.L."/>
            <person name="Whitfield E.J."/>
            <person name="Bayraktaroglu L."/>
            <person name="Berman B.P."/>
            <person name="Bettencourt B.R."/>
            <person name="Celniker S.E."/>
            <person name="de Grey A.D.N.J."/>
            <person name="Drysdale R.A."/>
            <person name="Harris N.L."/>
            <person name="Richter J."/>
            <person name="Russo S."/>
            <person name="Schroeder A.J."/>
            <person name="Shu S.Q."/>
            <person name="Stapleton M."/>
            <person name="Yamada C."/>
            <person name="Ashburner M."/>
            <person name="Gelbart W.M."/>
            <person name="Rubin G.M."/>
            <person name="Lewis S.E."/>
        </authorList>
    </citation>
    <scope>GENOME REANNOTATION</scope>
    <source>
        <strain>Berkeley</strain>
    </source>
</reference>
<reference key="5">
    <citation type="journal article" date="2002" name="Genome Biol.">
        <title>A Drosophila full-length cDNA resource.</title>
        <authorList>
            <person name="Stapleton M."/>
            <person name="Carlson J.W."/>
            <person name="Brokstein P."/>
            <person name="Yu C."/>
            <person name="Champe M."/>
            <person name="George R.A."/>
            <person name="Guarin H."/>
            <person name="Kronmiller B."/>
            <person name="Pacleb J.M."/>
            <person name="Park S."/>
            <person name="Wan K.H."/>
            <person name="Rubin G.M."/>
            <person name="Celniker S.E."/>
        </authorList>
    </citation>
    <scope>NUCLEOTIDE SEQUENCE [LARGE SCALE MRNA]</scope>
    <source>
        <strain>Berkeley</strain>
        <tissue>Embryo</tissue>
    </source>
</reference>
<reference key="6">
    <citation type="journal article" date="1997" name="Mol. Gen. Genet.">
        <title>The S-adenosyl-L-homocysteine hydrolase of Drosophila melanogaster: identification, deduced amino acid sequence and cytological localization of the structural gene.</title>
        <authorList>
            <person name="Caggese C."/>
            <person name="Ragone G."/>
            <person name="Barsanti P."/>
            <person name="Moschetti R."/>
            <person name="Messina A."/>
            <person name="Massari S."/>
            <person name="Caizzi R."/>
        </authorList>
    </citation>
    <scope>DEVELOPMENTAL STAGE</scope>
</reference>
<reference key="7">
    <citation type="journal article" date="2016" name="Genes Dev.">
        <title>Tissue-specific down-regulation of S-adenosyl-homocysteine via suppression of dAhcyL1/dAhcyL2 extends health span and life span in Drosophila.</title>
        <authorList>
            <person name="Parkhitko A.A."/>
            <person name="Binari R."/>
            <person name="Zhang N."/>
            <person name="Asara J.M."/>
            <person name="Demontis F."/>
            <person name="Perrimon N."/>
        </authorList>
    </citation>
    <scope>DISRUPTION PHENOTYPE</scope>
</reference>
<organism>
    <name type="scientific">Drosophila melanogaster</name>
    <name type="common">Fruit fly</name>
    <dbReference type="NCBI Taxonomy" id="7227"/>
    <lineage>
        <taxon>Eukaryota</taxon>
        <taxon>Metazoa</taxon>
        <taxon>Ecdysozoa</taxon>
        <taxon>Arthropoda</taxon>
        <taxon>Hexapoda</taxon>
        <taxon>Insecta</taxon>
        <taxon>Pterygota</taxon>
        <taxon>Neoptera</taxon>
        <taxon>Endopterygota</taxon>
        <taxon>Diptera</taxon>
        <taxon>Brachycera</taxon>
        <taxon>Muscomorpha</taxon>
        <taxon>Ephydroidea</taxon>
        <taxon>Drosophilidae</taxon>
        <taxon>Drosophila</taxon>
        <taxon>Sophophora</taxon>
    </lineage>
</organism>
<accession>P50245</accession>
<accession>Q27587</accession>
<accession>Q8MYX7</accession>
<accession>Q9VEQ4</accession>
<feature type="chain" id="PRO_0000116914" description="Adenosylhomocysteinase-like 2">
    <location>
        <begin position="1"/>
        <end position="492"/>
    </location>
</feature>
<feature type="region of interest" description="Disordered" evidence="3">
    <location>
        <begin position="43"/>
        <end position="64"/>
    </location>
</feature>
<feature type="binding site" evidence="2">
    <location>
        <position position="192"/>
    </location>
    <ligand>
        <name>substrate</name>
    </ligand>
</feature>
<feature type="binding site" evidence="2">
    <location>
        <position position="217"/>
    </location>
    <ligand>
        <name>substrate</name>
    </ligand>
</feature>
<feature type="binding site" evidence="2">
    <location>
        <begin position="218"/>
        <end position="220"/>
    </location>
    <ligand>
        <name>NAD(+)</name>
        <dbReference type="ChEBI" id="CHEBI:57540"/>
    </ligand>
</feature>
<feature type="binding site" evidence="2">
    <location>
        <position position="247"/>
    </location>
    <ligand>
        <name>substrate</name>
    </ligand>
</feature>
<feature type="binding site" evidence="2">
    <location>
        <position position="251"/>
    </location>
    <ligand>
        <name>substrate</name>
    </ligand>
</feature>
<feature type="binding site" evidence="2">
    <location>
        <begin position="283"/>
        <end position="288"/>
    </location>
    <ligand>
        <name>NAD(+)</name>
        <dbReference type="ChEBI" id="CHEBI:57540"/>
    </ligand>
</feature>
<feature type="binding site" evidence="2">
    <location>
        <position position="304"/>
    </location>
    <ligand>
        <name>NAD(+)</name>
        <dbReference type="ChEBI" id="CHEBI:57540"/>
    </ligand>
</feature>
<feature type="binding site" evidence="2">
    <location>
        <begin position="360"/>
        <end position="362"/>
    </location>
    <ligand>
        <name>NAD(+)</name>
        <dbReference type="ChEBI" id="CHEBI:57540"/>
    </ligand>
</feature>
<feature type="binding site" evidence="2">
    <location>
        <position position="407"/>
    </location>
    <ligand>
        <name>NAD(+)</name>
        <dbReference type="ChEBI" id="CHEBI:57540"/>
    </ligand>
</feature>
<feature type="binding site" evidence="2">
    <location>
        <begin position="486"/>
        <end position="490"/>
    </location>
    <ligand>
        <name>NAD(+)</name>
        <dbReference type="ChEBI" id="CHEBI:57540"/>
    </ligand>
</feature>
<feature type="binding site" evidence="2">
    <location>
        <position position="486"/>
    </location>
    <ligand>
        <name>NAD(+)</name>
        <dbReference type="ChEBI" id="CHEBI:57540"/>
    </ligand>
</feature>
<feature type="binding site" evidence="2">
    <location>
        <position position="490"/>
    </location>
    <ligand>
        <name>NAD(+)</name>
        <dbReference type="ChEBI" id="CHEBI:57540"/>
    </ligand>
</feature>
<feature type="sequence conflict" description="In Ref. 1; CAA31566." evidence="8" ref="1">
    <original>T</original>
    <variation>A</variation>
    <location>
        <position position="127"/>
    </location>
</feature>
<feature type="sequence conflict" description="In Ref. 1; CAA31566." evidence="8" ref="1">
    <original>PFKANYYRY</original>
    <variation>LLKPITTGWLPFFPFQFCTLVNNILISFADINQYLMLYPVILVL</variation>
    <location>
        <begin position="484"/>
        <end position="492"/>
    </location>
</feature>
<comment type="function">
    <text evidence="9">Might play a role in the regulation of methionine metabolism.</text>
</comment>
<comment type="cofactor">
    <cofactor evidence="1">
        <name>NAD(+)</name>
        <dbReference type="ChEBI" id="CHEBI:57540"/>
    </cofactor>
    <text evidence="1">Binds 1 NAD(+) per subunit.</text>
</comment>
<comment type="developmental stage">
    <text evidence="5 6">Expressed in all developmental stages from early embryo to adult (PubMed:9037110). Expressed in extended germ band embryos and in somatic mesoderm, yolk cells and midgut during late embryonic stages (PubMed:2903049).</text>
</comment>
<comment type="disruption phenotype">
    <text evidence="4">RNAi-mediated knockdown results in extended lifespan with increased fecundity and suppression of age-related decreased climbing activity and intestinal integrity (PubMed:27313316). Does not affect oxidative stress resistance (PubMed:27313316). RNAi-mediated knockdown in fat body or neurons does not show any phenotype (PubMed:27313316). Simultaneous knockdown of AhcyL1 in intestine results in extended life span (PubMed:27313316).</text>
</comment>
<comment type="similarity">
    <text evidence="8">Belongs to the adenosylhomocysteinase family.</text>
</comment>
<comment type="caution">
    <text evidence="8">Although it belongs to the adenosylhomocysteinase family, recombinant mouse homolog AHCYL1 expressed in bacteria shows no hydrolase activity, suggesting that Drosophila AhcyL2 may also lack this activity.</text>
</comment>
<comment type="sequence caution" evidence="8">
    <conflict type="erroneous gene model prediction">
        <sequence resource="EMBL-CDS" id="AAA84400"/>
    </conflict>
</comment>